<protein>
    <recommendedName>
        <fullName>Visinin-like protein 1</fullName>
        <shortName>VILIP</shortName>
    </recommendedName>
    <alternativeName>
        <fullName>Neural visinin-like protein 1</fullName>
        <shortName>NVL-1</shortName>
        <shortName>NVP-1</shortName>
    </alternativeName>
</protein>
<organism>
    <name type="scientific">Mus musculus</name>
    <name type="common">Mouse</name>
    <dbReference type="NCBI Taxonomy" id="10090"/>
    <lineage>
        <taxon>Eukaryota</taxon>
        <taxon>Metazoa</taxon>
        <taxon>Chordata</taxon>
        <taxon>Craniata</taxon>
        <taxon>Vertebrata</taxon>
        <taxon>Euteleostomi</taxon>
        <taxon>Mammalia</taxon>
        <taxon>Eutheria</taxon>
        <taxon>Euarchontoglires</taxon>
        <taxon>Glires</taxon>
        <taxon>Rodentia</taxon>
        <taxon>Myomorpha</taxon>
        <taxon>Muroidea</taxon>
        <taxon>Muridae</taxon>
        <taxon>Murinae</taxon>
        <taxon>Mus</taxon>
        <taxon>Mus</taxon>
    </lineage>
</organism>
<sequence length="191" mass="22142">MGKQNSKLAPEVMEDLVKSTEFNEHELKQWYKGFLKDCPSGRLNLEEFQQLYVKFFPYGDASKFAQHAFRTFDKNGDGTIDFREFICALSITSRGSFEQKLNWAFNMYDLDGDGKITRVEMLEIIEAIYKMVGTVIMMKMNEDGLTPEQRVDKIFSKMDKNKDDQITLDEFKEAAKSDPSIVLLLQCDIQK</sequence>
<proteinExistence type="evidence at protein level"/>
<dbReference type="EMBL" id="D21165">
    <property type="protein sequence ID" value="BAA04701.1"/>
    <property type="molecule type" value="mRNA"/>
</dbReference>
<dbReference type="EMBL" id="AY101375">
    <property type="protein sequence ID" value="AAM48292.1"/>
    <property type="molecule type" value="mRNA"/>
</dbReference>
<dbReference type="EMBL" id="BC046226">
    <property type="protein sequence ID" value="AAH46226.1"/>
    <property type="molecule type" value="mRNA"/>
</dbReference>
<dbReference type="CCDS" id="CCDS25816.1"/>
<dbReference type="RefSeq" id="NP_001365858.1">
    <property type="nucleotide sequence ID" value="NM_001378929.1"/>
</dbReference>
<dbReference type="RefSeq" id="NP_036168.1">
    <property type="nucleotide sequence ID" value="NM_012038.5"/>
</dbReference>
<dbReference type="SMR" id="P62761"/>
<dbReference type="BioGRID" id="205085">
    <property type="interactions" value="5"/>
</dbReference>
<dbReference type="FunCoup" id="P62761">
    <property type="interactions" value="142"/>
</dbReference>
<dbReference type="IntAct" id="P62761">
    <property type="interactions" value="1"/>
</dbReference>
<dbReference type="MINT" id="P62761"/>
<dbReference type="STRING" id="10090.ENSMUSP00000072145"/>
<dbReference type="GlyGen" id="P62761">
    <property type="glycosylation" value="1 site, 1 O-linked glycan (1 site)"/>
</dbReference>
<dbReference type="iPTMnet" id="P62761"/>
<dbReference type="PhosphoSitePlus" id="P62761"/>
<dbReference type="SwissPalm" id="P62761"/>
<dbReference type="PaxDb" id="10090-ENSMUSP00000072145"/>
<dbReference type="PeptideAtlas" id="P62761"/>
<dbReference type="ProteomicsDB" id="297922"/>
<dbReference type="Antibodypedia" id="27025">
    <property type="antibodies" value="1452 antibodies from 34 providers"/>
</dbReference>
<dbReference type="DNASU" id="26950"/>
<dbReference type="Ensembl" id="ENSMUST00000072299.7">
    <property type="protein sequence ID" value="ENSMUSP00000072145.6"/>
    <property type="gene ID" value="ENSMUSG00000054459.9"/>
</dbReference>
<dbReference type="Ensembl" id="ENSMUST00000220506.2">
    <property type="protein sequence ID" value="ENSMUSP00000152711.2"/>
    <property type="gene ID" value="ENSMUSG00000054459.9"/>
</dbReference>
<dbReference type="GeneID" id="26950"/>
<dbReference type="KEGG" id="mmu:26950"/>
<dbReference type="UCSC" id="uc011ykf.1">
    <property type="organism name" value="mouse"/>
</dbReference>
<dbReference type="AGR" id="MGI:1349453"/>
<dbReference type="CTD" id="7447"/>
<dbReference type="MGI" id="MGI:1349453">
    <property type="gene designation" value="Vsnl1"/>
</dbReference>
<dbReference type="VEuPathDB" id="HostDB:ENSMUSG00000054459"/>
<dbReference type="eggNOG" id="KOG0044">
    <property type="taxonomic scope" value="Eukaryota"/>
</dbReference>
<dbReference type="GeneTree" id="ENSGT00940000156513"/>
<dbReference type="HOGENOM" id="CLU_072366_1_0_1"/>
<dbReference type="InParanoid" id="P62761"/>
<dbReference type="OMA" id="HISRREM"/>
<dbReference type="OrthoDB" id="191686at2759"/>
<dbReference type="PhylomeDB" id="P62761"/>
<dbReference type="TreeFam" id="TF300009"/>
<dbReference type="BioGRID-ORCS" id="26950">
    <property type="hits" value="2 hits in 79 CRISPR screens"/>
</dbReference>
<dbReference type="CD-CODE" id="CE726F99">
    <property type="entry name" value="Postsynaptic density"/>
</dbReference>
<dbReference type="ChiTaRS" id="Vsnl1">
    <property type="organism name" value="mouse"/>
</dbReference>
<dbReference type="PRO" id="PR:P62761"/>
<dbReference type="Proteomes" id="UP000000589">
    <property type="component" value="Chromosome 12"/>
</dbReference>
<dbReference type="RNAct" id="P62761">
    <property type="molecule type" value="protein"/>
</dbReference>
<dbReference type="Bgee" id="ENSMUSG00000054459">
    <property type="expression patterns" value="Expressed in retrosplenial region and 162 other cell types or tissues"/>
</dbReference>
<dbReference type="ExpressionAtlas" id="P62761">
    <property type="expression patterns" value="baseline and differential"/>
</dbReference>
<dbReference type="GO" id="GO:0005829">
    <property type="term" value="C:cytosol"/>
    <property type="evidence" value="ECO:0000314"/>
    <property type="project" value="MGI"/>
</dbReference>
<dbReference type="GO" id="GO:0016020">
    <property type="term" value="C:membrane"/>
    <property type="evidence" value="ECO:0000314"/>
    <property type="project" value="MGI"/>
</dbReference>
<dbReference type="GO" id="GO:0005509">
    <property type="term" value="F:calcium ion binding"/>
    <property type="evidence" value="ECO:0007669"/>
    <property type="project" value="InterPro"/>
</dbReference>
<dbReference type="GO" id="GO:0046676">
    <property type="term" value="P:negative regulation of insulin secretion"/>
    <property type="evidence" value="ECO:0000315"/>
    <property type="project" value="MGI"/>
</dbReference>
<dbReference type="GO" id="GO:0045921">
    <property type="term" value="P:positive regulation of exocytosis"/>
    <property type="evidence" value="ECO:0000314"/>
    <property type="project" value="MGI"/>
</dbReference>
<dbReference type="GO" id="GO:0035774">
    <property type="term" value="P:positive regulation of insulin secretion involved in cellular response to glucose stimulus"/>
    <property type="evidence" value="ECO:0000314"/>
    <property type="project" value="MGI"/>
</dbReference>
<dbReference type="CDD" id="cd00051">
    <property type="entry name" value="EFh"/>
    <property type="match status" value="2"/>
</dbReference>
<dbReference type="FunFam" id="1.10.238.10:FF:000009">
    <property type="entry name" value="Visinin-like protein 1"/>
    <property type="match status" value="1"/>
</dbReference>
<dbReference type="Gene3D" id="1.10.238.10">
    <property type="entry name" value="EF-hand"/>
    <property type="match status" value="1"/>
</dbReference>
<dbReference type="InterPro" id="IPR011992">
    <property type="entry name" value="EF-hand-dom_pair"/>
</dbReference>
<dbReference type="InterPro" id="IPR018247">
    <property type="entry name" value="EF_Hand_1_Ca_BS"/>
</dbReference>
<dbReference type="InterPro" id="IPR002048">
    <property type="entry name" value="EF_hand_dom"/>
</dbReference>
<dbReference type="InterPro" id="IPR028846">
    <property type="entry name" value="Recoverin"/>
</dbReference>
<dbReference type="PANTHER" id="PTHR23055">
    <property type="entry name" value="CALCIUM BINDING PROTEINS"/>
    <property type="match status" value="1"/>
</dbReference>
<dbReference type="PANTHER" id="PTHR23055:SF101">
    <property type="entry name" value="VISININ-LIKE PROTEIN 1"/>
    <property type="match status" value="1"/>
</dbReference>
<dbReference type="Pfam" id="PF00036">
    <property type="entry name" value="EF-hand_1"/>
    <property type="match status" value="1"/>
</dbReference>
<dbReference type="Pfam" id="PF13499">
    <property type="entry name" value="EF-hand_7"/>
    <property type="match status" value="1"/>
</dbReference>
<dbReference type="PRINTS" id="PR00450">
    <property type="entry name" value="RECOVERIN"/>
</dbReference>
<dbReference type="SMART" id="SM00054">
    <property type="entry name" value="EFh"/>
    <property type="match status" value="3"/>
</dbReference>
<dbReference type="SUPFAM" id="SSF47473">
    <property type="entry name" value="EF-hand"/>
    <property type="match status" value="1"/>
</dbReference>
<dbReference type="PROSITE" id="PS00018">
    <property type="entry name" value="EF_HAND_1"/>
    <property type="match status" value="3"/>
</dbReference>
<dbReference type="PROSITE" id="PS50222">
    <property type="entry name" value="EF_HAND_2"/>
    <property type="match status" value="4"/>
</dbReference>
<comment type="function">
    <text evidence="1">Regulates (in vitro) the inhibition of rhodopsin phosphorylation in a calcium-dependent manner.</text>
</comment>
<comment type="miscellaneous">
    <text>Probably binds three calcium ions.</text>
</comment>
<comment type="similarity">
    <text evidence="3">Belongs to the recoverin family.</text>
</comment>
<gene>
    <name type="primary">Vsnl1</name>
    <name type="synonym">Visl1</name>
</gene>
<feature type="initiator methionine" description="Removed">
    <location>
        <position position="1"/>
    </location>
</feature>
<feature type="chain" id="PRO_0000073764" description="Visinin-like protein 1">
    <location>
        <begin position="2"/>
        <end position="191"/>
    </location>
</feature>
<feature type="domain" description="EF-hand 1" evidence="2">
    <location>
        <begin position="40"/>
        <end position="58"/>
    </location>
</feature>
<feature type="domain" description="EF-hand 2" evidence="2">
    <location>
        <begin position="60"/>
        <end position="95"/>
    </location>
</feature>
<feature type="domain" description="EF-hand 3" evidence="2">
    <location>
        <begin position="96"/>
        <end position="131"/>
    </location>
</feature>
<feature type="domain" description="EF-hand 4" evidence="2">
    <location>
        <begin position="146"/>
        <end position="181"/>
    </location>
</feature>
<feature type="binding site" evidence="2">
    <location>
        <position position="73"/>
    </location>
    <ligand>
        <name>Ca(2+)</name>
        <dbReference type="ChEBI" id="CHEBI:29108"/>
        <label>1</label>
    </ligand>
</feature>
<feature type="binding site" evidence="2">
    <location>
        <position position="75"/>
    </location>
    <ligand>
        <name>Ca(2+)</name>
        <dbReference type="ChEBI" id="CHEBI:29108"/>
        <label>1</label>
    </ligand>
</feature>
<feature type="binding site" evidence="2">
    <location>
        <position position="77"/>
    </location>
    <ligand>
        <name>Ca(2+)</name>
        <dbReference type="ChEBI" id="CHEBI:29108"/>
        <label>1</label>
    </ligand>
</feature>
<feature type="binding site" evidence="2">
    <location>
        <position position="79"/>
    </location>
    <ligand>
        <name>Ca(2+)</name>
        <dbReference type="ChEBI" id="CHEBI:29108"/>
        <label>1</label>
    </ligand>
</feature>
<feature type="binding site" evidence="2">
    <location>
        <position position="84"/>
    </location>
    <ligand>
        <name>Ca(2+)</name>
        <dbReference type="ChEBI" id="CHEBI:29108"/>
        <label>1</label>
    </ligand>
</feature>
<feature type="binding site" evidence="2">
    <location>
        <position position="109"/>
    </location>
    <ligand>
        <name>Ca(2+)</name>
        <dbReference type="ChEBI" id="CHEBI:29108"/>
        <label>2</label>
    </ligand>
</feature>
<feature type="binding site" evidence="2">
    <location>
        <position position="111"/>
    </location>
    <ligand>
        <name>Ca(2+)</name>
        <dbReference type="ChEBI" id="CHEBI:29108"/>
        <label>2</label>
    </ligand>
</feature>
<feature type="binding site" evidence="2">
    <location>
        <position position="113"/>
    </location>
    <ligand>
        <name>Ca(2+)</name>
        <dbReference type="ChEBI" id="CHEBI:29108"/>
        <label>2</label>
    </ligand>
</feature>
<feature type="binding site" evidence="2">
    <location>
        <position position="115"/>
    </location>
    <ligand>
        <name>Ca(2+)</name>
        <dbReference type="ChEBI" id="CHEBI:29108"/>
        <label>2</label>
    </ligand>
</feature>
<feature type="binding site" evidence="2">
    <location>
        <position position="120"/>
    </location>
    <ligand>
        <name>Ca(2+)</name>
        <dbReference type="ChEBI" id="CHEBI:29108"/>
        <label>2</label>
    </ligand>
</feature>
<feature type="binding site" evidence="2">
    <location>
        <position position="159"/>
    </location>
    <ligand>
        <name>Ca(2+)</name>
        <dbReference type="ChEBI" id="CHEBI:29108"/>
        <label>3</label>
    </ligand>
</feature>
<feature type="binding site" evidence="2">
    <location>
        <position position="161"/>
    </location>
    <ligand>
        <name>Ca(2+)</name>
        <dbReference type="ChEBI" id="CHEBI:29108"/>
        <label>3</label>
    </ligand>
</feature>
<feature type="binding site" evidence="2">
    <location>
        <position position="163"/>
    </location>
    <ligand>
        <name>Ca(2+)</name>
        <dbReference type="ChEBI" id="CHEBI:29108"/>
        <label>3</label>
    </ligand>
</feature>
<feature type="binding site" evidence="2">
    <location>
        <position position="165"/>
    </location>
    <ligand>
        <name>Ca(2+)</name>
        <dbReference type="ChEBI" id="CHEBI:29108"/>
        <label>3</label>
    </ligand>
</feature>
<feature type="binding site" evidence="2">
    <location>
        <position position="170"/>
    </location>
    <ligand>
        <name>Ca(2+)</name>
        <dbReference type="ChEBI" id="CHEBI:29108"/>
        <label>3</label>
    </ligand>
</feature>
<feature type="lipid moiety-binding region" description="N-myristoyl glycine" evidence="1">
    <location>
        <position position="2"/>
    </location>
</feature>
<evidence type="ECO:0000250" key="1"/>
<evidence type="ECO:0000255" key="2">
    <source>
        <dbReference type="PROSITE-ProRule" id="PRU00448"/>
    </source>
</evidence>
<evidence type="ECO:0000305" key="3"/>
<keyword id="KW-0106">Calcium</keyword>
<keyword id="KW-0903">Direct protein sequencing</keyword>
<keyword id="KW-0449">Lipoprotein</keyword>
<keyword id="KW-0479">Metal-binding</keyword>
<keyword id="KW-0519">Myristate</keyword>
<keyword id="KW-1185">Reference proteome</keyword>
<keyword id="KW-0677">Repeat</keyword>
<accession>P62761</accession>
<accession>P28677</accession>
<accession>P29103</accession>
<accession>P42323</accession>
<accession>Q9UM20</accession>
<reference key="1">
    <citation type="submission" date="1993-10" db="EMBL/GenBank/DDBJ databases">
        <title>cDNA cloning and primary structure of mouse neural visinin-like CA2+-binding protein type 1 (NVP-1).</title>
        <authorList>
            <person name="Shirai Y."/>
            <person name="Asami M."/>
            <person name="Mukai H."/>
            <person name="Chang C."/>
            <person name="Shuntoh H."/>
            <person name="Kuno T."/>
            <person name="Tanaka C."/>
        </authorList>
    </citation>
    <scope>NUCLEOTIDE SEQUENCE [MRNA]</scope>
    <source>
        <strain>BALB/cJ</strain>
    </source>
</reference>
<reference key="2">
    <citation type="submission" date="2002-05" db="EMBL/GenBank/DDBJ databases">
        <title>Searching for the endomorphin-1-2 pro-peptide precursor(s) protein(s): cloning of a protein encoding an endomorphin-2-like peptide sequence.</title>
        <authorList>
            <person name="Anton B."/>
            <person name="Matus M."/>
            <person name="Leff P."/>
            <person name="Calva J.C."/>
            <person name="Acevedo R."/>
            <person name="Hernandez A."/>
            <person name="Medecigo M."/>
            <person name="Valdez A."/>
            <person name="Sanchez Lopez R."/>
            <person name="Vergara P."/>
            <person name="Torner C."/>
            <person name="Segovia J."/>
            <person name="Alagon A."/>
        </authorList>
    </citation>
    <scope>NUCLEOTIDE SEQUENCE [MRNA]</scope>
    <source>
        <strain>BALB/cJ</strain>
        <tissue>Brain</tissue>
    </source>
</reference>
<reference key="3">
    <citation type="journal article" date="2004" name="Genome Res.">
        <title>The status, quality, and expansion of the NIH full-length cDNA project: the Mammalian Gene Collection (MGC).</title>
        <authorList>
            <consortium name="The MGC Project Team"/>
        </authorList>
    </citation>
    <scope>NUCLEOTIDE SEQUENCE [LARGE SCALE MRNA]</scope>
    <source>
        <strain>C57BL/6J</strain>
        <tissue>Brain</tissue>
    </source>
</reference>
<reference key="4">
    <citation type="submission" date="2007-04" db="UniProtKB">
        <authorList>
            <person name="Lubec G."/>
            <person name="Kang S.U."/>
        </authorList>
    </citation>
    <scope>PROTEIN SEQUENCE OF 8-18; 43-63 AND 119-150</scope>
    <scope>IDENTIFICATION BY MASS SPECTROMETRY</scope>
    <source>
        <strain>C57BL/6J</strain>
        <tissue>Brain</tissue>
    </source>
</reference>
<reference key="5">
    <citation type="journal article" date="2010" name="Cell">
        <title>A tissue-specific atlas of mouse protein phosphorylation and expression.</title>
        <authorList>
            <person name="Huttlin E.L."/>
            <person name="Jedrychowski M.P."/>
            <person name="Elias J.E."/>
            <person name="Goswami T."/>
            <person name="Rad R."/>
            <person name="Beausoleil S.A."/>
            <person name="Villen J."/>
            <person name="Haas W."/>
            <person name="Sowa M.E."/>
            <person name="Gygi S.P."/>
        </authorList>
    </citation>
    <scope>IDENTIFICATION BY MASS SPECTROMETRY [LARGE SCALE ANALYSIS]</scope>
    <source>
        <tissue>Brain</tissue>
        <tissue>Brown adipose tissue</tissue>
        <tissue>Kidney</tissue>
        <tissue>Liver</tissue>
        <tissue>Lung</tissue>
    </source>
</reference>
<name>VISL1_MOUSE</name>